<proteinExistence type="evidence at protein level"/>
<protein>
    <recommendedName>
        <fullName evidence="6">Sodium/potassium exporting P-type ATPase 2</fullName>
        <ecNumber evidence="2">7.2.2.3</ecNumber>
    </recommendedName>
</protein>
<keyword id="KW-0067">ATP-binding</keyword>
<keyword id="KW-1003">Cell membrane</keyword>
<keyword id="KW-0406">Ion transport</keyword>
<keyword id="KW-0460">Magnesium</keyword>
<keyword id="KW-0472">Membrane</keyword>
<keyword id="KW-0479">Metal-binding</keyword>
<keyword id="KW-0547">Nucleotide-binding</keyword>
<keyword id="KW-0630">Potassium</keyword>
<keyword id="KW-0633">Potassium transport</keyword>
<keyword id="KW-0915">Sodium</keyword>
<keyword id="KW-0739">Sodium transport</keyword>
<keyword id="KW-1278">Translocase</keyword>
<keyword id="KW-0812">Transmembrane</keyword>
<keyword id="KW-1133">Transmembrane helix</keyword>
<keyword id="KW-0813">Transport</keyword>
<accession>O13398</accession>
<comment type="function">
    <text evidence="2 4">Catalyzes the hydrolysis of ATP coupled with the export of sodium and potassium from the cell (PubMed:9430707). May be an inefficient sodium exporter (PubMed:9430707). May transport other cations such as lithium (By similarity). Sodium/potassium efflux ATPases are involved in salt tolerance and maintaining the membrane potential across the plasma membrane in high salinity (Na+) or alkaline (K+) environments (PubMed:9430707).</text>
</comment>
<comment type="catalytic activity">
    <reaction evidence="2">
        <text>Na(+)(in) + ATP + H2O = Na(+)(out) + ADP + phosphate + H(+)</text>
        <dbReference type="Rhea" id="RHEA:14633"/>
        <dbReference type="ChEBI" id="CHEBI:15377"/>
        <dbReference type="ChEBI" id="CHEBI:15378"/>
        <dbReference type="ChEBI" id="CHEBI:29101"/>
        <dbReference type="ChEBI" id="CHEBI:30616"/>
        <dbReference type="ChEBI" id="CHEBI:43474"/>
        <dbReference type="ChEBI" id="CHEBI:456216"/>
        <dbReference type="EC" id="7.2.2.3"/>
    </reaction>
    <physiologicalReaction direction="left-to-right" evidence="2">
        <dbReference type="Rhea" id="RHEA:14634"/>
    </physiologicalReaction>
</comment>
<comment type="catalytic activity">
    <reaction evidence="7">
        <text>K(+)(in) + ATP + H2O = K(+)(out) + ADP + phosphate + H(+)</text>
        <dbReference type="Rhea" id="RHEA:75815"/>
        <dbReference type="ChEBI" id="CHEBI:15377"/>
        <dbReference type="ChEBI" id="CHEBI:15378"/>
        <dbReference type="ChEBI" id="CHEBI:29103"/>
        <dbReference type="ChEBI" id="CHEBI:30616"/>
        <dbReference type="ChEBI" id="CHEBI:43474"/>
        <dbReference type="ChEBI" id="CHEBI:456216"/>
    </reaction>
</comment>
<comment type="cofactor">
    <cofactor evidence="1">
        <name>Mg(2+)</name>
        <dbReference type="ChEBI" id="CHEBI:18420"/>
    </cofactor>
</comment>
<comment type="subcellular location">
    <subcellularLocation>
        <location evidence="7">Cell membrane</location>
        <topology evidence="3">Multi-pass membrane protein</topology>
    </subcellularLocation>
</comment>
<comment type="induction">
    <text evidence="4">Induced by high pH (PubMed:9430707). Not induced in response to sodium ions (PubMed:9430707).</text>
</comment>
<comment type="PTM">
    <text evidence="2">The active site is phosphorylated in presence of sodium or potassium and in conditions of higher pH. Not phosphorylated in presence of calcium ions.</text>
</comment>
<comment type="disruption phenotype">
    <text evidence="4">Decreases the rate of potassium efflux from the cell (PubMed:9430707). Sensitive to high pH (PubMed:9430707).</text>
</comment>
<comment type="similarity">
    <text evidence="6">Belongs to the cation transport ATPase (P-type) (TC 3.A.3) family. Type IID subfamily.</text>
</comment>
<feature type="chain" id="PRO_0000458052" description="Sodium/potassium exporting P-type ATPase 2">
    <location>
        <begin position="1"/>
        <end position="1082"/>
    </location>
</feature>
<feature type="topological domain" description="Cytoplasmic" evidence="6">
    <location>
        <begin position="1"/>
        <end position="75"/>
    </location>
</feature>
<feature type="transmembrane region" description="Helical" evidence="3">
    <location>
        <begin position="76"/>
        <end position="96"/>
    </location>
</feature>
<feature type="topological domain" description="Extracellular" evidence="6">
    <location>
        <begin position="97"/>
        <end position="98"/>
    </location>
</feature>
<feature type="transmembrane region" description="Helical" evidence="3">
    <location>
        <begin position="99"/>
        <end position="119"/>
    </location>
</feature>
<feature type="topological domain" description="Cytoplasmic" evidence="6">
    <location>
        <begin position="120"/>
        <end position="308"/>
    </location>
</feature>
<feature type="transmembrane region" description="Helical" evidence="3">
    <location>
        <begin position="309"/>
        <end position="329"/>
    </location>
</feature>
<feature type="topological domain" description="Extracellular" evidence="6">
    <location>
        <begin position="330"/>
        <end position="336"/>
    </location>
</feature>
<feature type="transmembrane region" description="Helical" evidence="3">
    <location>
        <begin position="337"/>
        <end position="357"/>
    </location>
</feature>
<feature type="topological domain" description="Cytoplasmic" evidence="6">
    <location>
        <begin position="358"/>
        <end position="807"/>
    </location>
</feature>
<feature type="transmembrane region" description="Helical" evidence="3">
    <location>
        <begin position="808"/>
        <end position="828"/>
    </location>
</feature>
<feature type="topological domain" description="Extracellular" evidence="6">
    <location>
        <begin position="829"/>
        <end position="832"/>
    </location>
</feature>
<feature type="transmembrane region" description="Helical" evidence="3">
    <location>
        <begin position="833"/>
        <end position="853"/>
    </location>
</feature>
<feature type="topological domain" description="Cytoplasmic" evidence="6">
    <location>
        <begin position="854"/>
        <end position="884"/>
    </location>
</feature>
<feature type="transmembrane region" description="Helical" evidence="3">
    <location>
        <begin position="885"/>
        <end position="905"/>
    </location>
</feature>
<feature type="topological domain" description="Extracellular" evidence="6">
    <location>
        <begin position="906"/>
        <end position="935"/>
    </location>
</feature>
<feature type="transmembrane region" description="Helical" evidence="3">
    <location>
        <begin position="936"/>
        <end position="956"/>
    </location>
</feature>
<feature type="topological domain" description="Cytoplasmic" evidence="6">
    <location>
        <begin position="957"/>
        <end position="983"/>
    </location>
</feature>
<feature type="transmembrane region" description="Helical" evidence="3">
    <location>
        <begin position="984"/>
        <end position="1004"/>
    </location>
</feature>
<feature type="topological domain" description="Extracellular" evidence="6">
    <location>
        <begin position="1005"/>
        <end position="1007"/>
    </location>
</feature>
<feature type="transmembrane region" description="Helical" evidence="3">
    <location>
        <begin position="1008"/>
        <end position="1028"/>
    </location>
</feature>
<feature type="topological domain" description="Cytoplasmic" evidence="6">
    <location>
        <begin position="1029"/>
        <end position="1082"/>
    </location>
</feature>
<feature type="active site" description="4-aspartylphosphate intermediate" evidence="1">
    <location>
        <position position="393"/>
    </location>
</feature>
<feature type="binding site" evidence="1">
    <location>
        <position position="393"/>
    </location>
    <ligand>
        <name>Mg(2+)</name>
        <dbReference type="ChEBI" id="CHEBI:18420"/>
    </ligand>
</feature>
<feature type="binding site" evidence="1">
    <location>
        <position position="395"/>
    </location>
    <ligand>
        <name>ATP</name>
        <dbReference type="ChEBI" id="CHEBI:30616"/>
    </ligand>
</feature>
<feature type="binding site" evidence="1">
    <location>
        <position position="395"/>
    </location>
    <ligand>
        <name>Mg(2+)</name>
        <dbReference type="ChEBI" id="CHEBI:18420"/>
    </ligand>
</feature>
<feature type="binding site" evidence="1">
    <location>
        <position position="499"/>
    </location>
    <ligand>
        <name>ATP</name>
        <dbReference type="ChEBI" id="CHEBI:30616"/>
    </ligand>
</feature>
<feature type="binding site" evidence="1">
    <location>
        <position position="552"/>
    </location>
    <ligand>
        <name>ATP</name>
        <dbReference type="ChEBI" id="CHEBI:30616"/>
    </ligand>
</feature>
<feature type="binding site" evidence="1">
    <location>
        <position position="604"/>
    </location>
    <ligand>
        <name>ATP</name>
        <dbReference type="ChEBI" id="CHEBI:30616"/>
    </ligand>
</feature>
<feature type="binding site" evidence="1">
    <location>
        <position position="664"/>
    </location>
    <ligand>
        <name>ATP</name>
        <dbReference type="ChEBI" id="CHEBI:30616"/>
    </ligand>
</feature>
<feature type="binding site" evidence="1">
    <location>
        <position position="665"/>
    </location>
    <ligand>
        <name>ATP</name>
        <dbReference type="ChEBI" id="CHEBI:30616"/>
    </ligand>
</feature>
<feature type="binding site" evidence="1">
    <location>
        <position position="666"/>
    </location>
    <ligand>
        <name>ATP</name>
        <dbReference type="ChEBI" id="CHEBI:30616"/>
    </ligand>
</feature>
<feature type="binding site" evidence="1">
    <location>
        <position position="723"/>
    </location>
    <ligand>
        <name>ATP</name>
        <dbReference type="ChEBI" id="CHEBI:30616"/>
    </ligand>
</feature>
<feature type="binding site" evidence="1">
    <location>
        <position position="729"/>
    </location>
    <ligand>
        <name>ATP</name>
        <dbReference type="ChEBI" id="CHEBI:30616"/>
    </ligand>
</feature>
<feature type="binding site" evidence="1">
    <location>
        <position position="748"/>
    </location>
    <ligand>
        <name>Mg(2+)</name>
        <dbReference type="ChEBI" id="CHEBI:18420"/>
    </ligand>
</feature>
<feature type="binding site" evidence="1">
    <location>
        <position position="751"/>
    </location>
    <ligand>
        <name>ATP</name>
        <dbReference type="ChEBI" id="CHEBI:30616"/>
    </ligand>
</feature>
<reference evidence="8" key="1">
    <citation type="journal article" date="1998" name="J. Biol. Chem.">
        <title>P-type ATPases mediate sodium and potassium effluxes in Schwanniomyces occidentalis.</title>
        <authorList>
            <person name="Banuelos M.A."/>
            <person name="Rodriguez-Navarro A."/>
        </authorList>
    </citation>
    <scope>NUCLEOTIDE SEQUENCE [GENOMIC DNA]</scope>
    <scope>FUNCTION</scope>
    <scope>CATALYTIC ACTIVITY</scope>
    <scope>SUBCELLULAR LOCATION</scope>
    <scope>INDUCTION</scope>
    <scope>DISRUPTION PHENOTYPE</scope>
</reference>
<name>ATN2_SCHOC</name>
<gene>
    <name evidence="5" type="primary">ENA2</name>
</gene>
<dbReference type="EC" id="7.2.2.3" evidence="2"/>
<dbReference type="EMBL" id="AF030861">
    <property type="protein sequence ID" value="AAB86427.1"/>
    <property type="molecule type" value="Genomic_DNA"/>
</dbReference>
<dbReference type="PIR" id="T31112">
    <property type="entry name" value="T31112"/>
</dbReference>
<dbReference type="SMR" id="O13398"/>
<dbReference type="TCDB" id="3.A.3.9.3">
    <property type="family name" value="the p-type atpase (p-atpase) superfamily"/>
</dbReference>
<dbReference type="GO" id="GO:0005886">
    <property type="term" value="C:plasma membrane"/>
    <property type="evidence" value="ECO:0000314"/>
    <property type="project" value="UniProtKB"/>
</dbReference>
<dbReference type="GO" id="GO:0005524">
    <property type="term" value="F:ATP binding"/>
    <property type="evidence" value="ECO:0007669"/>
    <property type="project" value="UniProtKB-KW"/>
</dbReference>
<dbReference type="GO" id="GO:0016887">
    <property type="term" value="F:ATP hydrolysis activity"/>
    <property type="evidence" value="ECO:0007669"/>
    <property type="project" value="InterPro"/>
</dbReference>
<dbReference type="GO" id="GO:0046872">
    <property type="term" value="F:metal ion binding"/>
    <property type="evidence" value="ECO:0007669"/>
    <property type="project" value="UniProtKB-KW"/>
</dbReference>
<dbReference type="GO" id="GO:0008900">
    <property type="term" value="F:P-type potassium:proton transporter activity"/>
    <property type="evidence" value="ECO:0000315"/>
    <property type="project" value="UniProtKB"/>
</dbReference>
<dbReference type="GO" id="GO:0051452">
    <property type="term" value="P:intracellular pH reduction"/>
    <property type="evidence" value="ECO:0000315"/>
    <property type="project" value="UniProtKB"/>
</dbReference>
<dbReference type="GO" id="GO:0097623">
    <property type="term" value="P:potassium ion export across plasma membrane"/>
    <property type="evidence" value="ECO:0000315"/>
    <property type="project" value="UniProtKB"/>
</dbReference>
<dbReference type="GO" id="GO:0006814">
    <property type="term" value="P:sodium ion transport"/>
    <property type="evidence" value="ECO:0007669"/>
    <property type="project" value="UniProtKB-KW"/>
</dbReference>
<dbReference type="FunFam" id="1.20.1110.10:FF:000040">
    <property type="entry name" value="Na(+)-exporting P-type ATPase"/>
    <property type="match status" value="1"/>
</dbReference>
<dbReference type="FunFam" id="1.20.1110.10:FF:000015">
    <property type="entry name" value="Sodium ion P-type ATPase"/>
    <property type="match status" value="1"/>
</dbReference>
<dbReference type="FunFam" id="3.40.1110.10:FF:000039">
    <property type="entry name" value="Sodium P-type ATPase"/>
    <property type="match status" value="1"/>
</dbReference>
<dbReference type="FunFam" id="3.40.50.1000:FF:000047">
    <property type="entry name" value="Sodium P-type ATPase"/>
    <property type="match status" value="1"/>
</dbReference>
<dbReference type="Gene3D" id="3.40.1110.10">
    <property type="entry name" value="Calcium-transporting ATPase, cytoplasmic domain N"/>
    <property type="match status" value="1"/>
</dbReference>
<dbReference type="Gene3D" id="2.70.150.10">
    <property type="entry name" value="Calcium-transporting ATPase, cytoplasmic transduction domain A"/>
    <property type="match status" value="1"/>
</dbReference>
<dbReference type="Gene3D" id="1.20.1110.10">
    <property type="entry name" value="Calcium-transporting ATPase, transmembrane domain"/>
    <property type="match status" value="2"/>
</dbReference>
<dbReference type="Gene3D" id="3.40.50.1000">
    <property type="entry name" value="HAD superfamily/HAD-like"/>
    <property type="match status" value="1"/>
</dbReference>
<dbReference type="InterPro" id="IPR006068">
    <property type="entry name" value="ATPase_P-typ_cation-transptr_C"/>
</dbReference>
<dbReference type="InterPro" id="IPR004014">
    <property type="entry name" value="ATPase_P-typ_cation-transptr_N"/>
</dbReference>
<dbReference type="InterPro" id="IPR023299">
    <property type="entry name" value="ATPase_P-typ_cyto_dom_N"/>
</dbReference>
<dbReference type="InterPro" id="IPR018303">
    <property type="entry name" value="ATPase_P-typ_P_site"/>
</dbReference>
<dbReference type="InterPro" id="IPR023298">
    <property type="entry name" value="ATPase_P-typ_TM_dom_sf"/>
</dbReference>
<dbReference type="InterPro" id="IPR008250">
    <property type="entry name" value="ATPase_P-typ_transduc_dom_A_sf"/>
</dbReference>
<dbReference type="InterPro" id="IPR036412">
    <property type="entry name" value="HAD-like_sf"/>
</dbReference>
<dbReference type="InterPro" id="IPR023214">
    <property type="entry name" value="HAD_sf"/>
</dbReference>
<dbReference type="InterPro" id="IPR006414">
    <property type="entry name" value="P-type_ATPase_IID"/>
</dbReference>
<dbReference type="InterPro" id="IPR001757">
    <property type="entry name" value="P_typ_ATPase"/>
</dbReference>
<dbReference type="InterPro" id="IPR044492">
    <property type="entry name" value="P_typ_ATPase_HD_dom"/>
</dbReference>
<dbReference type="NCBIfam" id="TIGR01523">
    <property type="entry name" value="ATPase-IID_K-Na"/>
    <property type="match status" value="1"/>
</dbReference>
<dbReference type="NCBIfam" id="TIGR01494">
    <property type="entry name" value="ATPase_P-type"/>
    <property type="match status" value="3"/>
</dbReference>
<dbReference type="PANTHER" id="PTHR42861">
    <property type="entry name" value="CALCIUM-TRANSPORTING ATPASE"/>
    <property type="match status" value="1"/>
</dbReference>
<dbReference type="Pfam" id="PF13246">
    <property type="entry name" value="Cation_ATPase"/>
    <property type="match status" value="1"/>
</dbReference>
<dbReference type="Pfam" id="PF00689">
    <property type="entry name" value="Cation_ATPase_C"/>
    <property type="match status" value="1"/>
</dbReference>
<dbReference type="Pfam" id="PF00690">
    <property type="entry name" value="Cation_ATPase_N"/>
    <property type="match status" value="1"/>
</dbReference>
<dbReference type="Pfam" id="PF00122">
    <property type="entry name" value="E1-E2_ATPase"/>
    <property type="match status" value="1"/>
</dbReference>
<dbReference type="Pfam" id="PF00702">
    <property type="entry name" value="Hydrolase"/>
    <property type="match status" value="1"/>
</dbReference>
<dbReference type="PRINTS" id="PR00119">
    <property type="entry name" value="CATATPASE"/>
</dbReference>
<dbReference type="SFLD" id="SFLDS00003">
    <property type="entry name" value="Haloacid_Dehalogenase"/>
    <property type="match status" value="1"/>
</dbReference>
<dbReference type="SFLD" id="SFLDF00027">
    <property type="entry name" value="p-type_atpase"/>
    <property type="match status" value="1"/>
</dbReference>
<dbReference type="SMART" id="SM00831">
    <property type="entry name" value="Cation_ATPase_N"/>
    <property type="match status" value="1"/>
</dbReference>
<dbReference type="SUPFAM" id="SSF81653">
    <property type="entry name" value="Calcium ATPase, transduction domain A"/>
    <property type="match status" value="1"/>
</dbReference>
<dbReference type="SUPFAM" id="SSF81665">
    <property type="entry name" value="Calcium ATPase, transmembrane domain M"/>
    <property type="match status" value="1"/>
</dbReference>
<dbReference type="SUPFAM" id="SSF56784">
    <property type="entry name" value="HAD-like"/>
    <property type="match status" value="1"/>
</dbReference>
<dbReference type="SUPFAM" id="SSF81660">
    <property type="entry name" value="Metal cation-transporting ATPase, ATP-binding domain N"/>
    <property type="match status" value="1"/>
</dbReference>
<dbReference type="PROSITE" id="PS00154">
    <property type="entry name" value="ATPASE_E1_E2"/>
    <property type="match status" value="1"/>
</dbReference>
<sequence>MSSINTNVAEKHSYKERVNTDASSLSADGSVEAHRLTIEQVAKIFNTDIINGLSTSQANQTLKDFGANTLGDGDKISLTKIIAHQVCNAMILVLIISMVIALAIKDWISGGVIGFVVLINISVGFVQEYKAEKTMGSLRSLSSPTARVTRNGDDTTIPAEEVVPGDIVHIKVGDTVPADLRLIDLMNLETDEALLTGESLPITKNHLDVYDDYSVPIPVGDRLNLAYSSSVVSKGRGTGIVIATALDTQIGQIAKSLRNNNSVIRKVDKSNGKPKKREYSKAFCGTIKDIFYNILGINVGTPLQRKLSWLAIFLFWGCRYFCNYCNGIPKNRVNKEVAIYAICVALSMIPSALIVVLTITMAVGAQVMVMKHVIVRKLDSLEALGGINDICSDKTGTLTQGKMIARKTWIPNVGTFNVGNSNDPFNPKAGEVSFVNLSPKFIEETDEEIDFKQKLPSPFPENFNNWLLTATLANIATLNQSRDEETGELVWKAHGDATEIAIQVFTSRLNYGRDSLIENYEHLAEFPFDSSIKRMSAVYQSLQTNQIKVYTKGAVERVLNCCTHWYGHEENDELYDNQQLKELTDDDKHLIESNMNALSTQGLRVLAFATKDITNSSIDLSNRESIESNLIFQGLIGIYDPPRPETAGSVKSCHNAGINVHMLTGDHPGTAKAIAQEVGILPHNLYHYSEEVVKAMCMTANEFDSLSDDEIDKLPVLPLVIARCAPQTKVRMIEALHRRGKFVAMTGDGVNDSPSLKKADVGIAMGLNGSDVAKDASDIVLTDDNFASILNAIEEGRRMSSNIQKFVLQLLAENVAQALYLMVGLAFIDDSGLSVFPLSPVEVLWILVVTSCFPAMDLGQERASDDILEESPNSTIFTWEVIIDMIVYGFWMAVCCLVCFVIIVYGEGDPYLGVNCNKSSSSNSDVCELVFRGRSASFATMTWCALILAWECIHPYNSLFYMRQDTDHPWWKQTVIDLWDNQFLFWSVAIGFISVFPVVYIPVINTKVFLHGPIGYEWGLAVGFSILFLAGSELWKWIKRIHKRKANKKAKNPEYELERSDPFKKYASFSRSNTMDRPELMV</sequence>
<organism evidence="8">
    <name type="scientific">Schwanniomyces occidentalis</name>
    <name type="common">Yeast</name>
    <name type="synonym">Debaryomyces occidentalis</name>
    <dbReference type="NCBI Taxonomy" id="27300"/>
    <lineage>
        <taxon>Eukaryota</taxon>
        <taxon>Fungi</taxon>
        <taxon>Dikarya</taxon>
        <taxon>Ascomycota</taxon>
        <taxon>Saccharomycotina</taxon>
        <taxon>Pichiomycetes</taxon>
        <taxon>Debaryomycetaceae</taxon>
        <taxon>Schwanniomyces</taxon>
    </lineage>
</organism>
<evidence type="ECO:0000250" key="1">
    <source>
        <dbReference type="UniProtKB" id="P04191"/>
    </source>
</evidence>
<evidence type="ECO:0000250" key="2">
    <source>
        <dbReference type="UniProtKB" id="P13587"/>
    </source>
</evidence>
<evidence type="ECO:0000255" key="3"/>
<evidence type="ECO:0000269" key="4">
    <source>
    </source>
</evidence>
<evidence type="ECO:0000303" key="5">
    <source>
    </source>
</evidence>
<evidence type="ECO:0000305" key="6"/>
<evidence type="ECO:0000305" key="7">
    <source>
    </source>
</evidence>
<evidence type="ECO:0000312" key="8">
    <source>
        <dbReference type="EMBL" id="AAB86427.1"/>
    </source>
</evidence>